<organism>
    <name type="scientific">Astrebla lappacea</name>
    <name type="common">Curly Mitchell grass</name>
    <name type="synonym">Danthonia lappacea</name>
    <dbReference type="NCBI Taxonomy" id="66004"/>
    <lineage>
        <taxon>Eukaryota</taxon>
        <taxon>Viridiplantae</taxon>
        <taxon>Streptophyta</taxon>
        <taxon>Embryophyta</taxon>
        <taxon>Tracheophyta</taxon>
        <taxon>Spermatophyta</taxon>
        <taxon>Magnoliopsida</taxon>
        <taxon>Liliopsida</taxon>
        <taxon>Poales</taxon>
        <taxon>Poaceae</taxon>
        <taxon>PACMAD clade</taxon>
        <taxon>Chloridoideae</taxon>
        <taxon>Cynodonteae</taxon>
        <taxon>Eleusininae</taxon>
        <taxon>Astrebla</taxon>
    </lineage>
</organism>
<dbReference type="EMBL" id="AF144589">
    <property type="protein sequence ID" value="AAF20345.1"/>
    <property type="molecule type" value="Genomic_DNA"/>
</dbReference>
<dbReference type="RefSeq" id="YP_009656107.1">
    <property type="nucleotide sequence ID" value="NC_042839.1"/>
</dbReference>
<dbReference type="GeneID" id="40503323"/>
<dbReference type="GO" id="GO:0009507">
    <property type="term" value="C:chloroplast"/>
    <property type="evidence" value="ECO:0007669"/>
    <property type="project" value="UniProtKB-SubCell"/>
</dbReference>
<dbReference type="GO" id="GO:0003723">
    <property type="term" value="F:RNA binding"/>
    <property type="evidence" value="ECO:0007669"/>
    <property type="project" value="UniProtKB-KW"/>
</dbReference>
<dbReference type="GO" id="GO:0006397">
    <property type="term" value="P:mRNA processing"/>
    <property type="evidence" value="ECO:0007669"/>
    <property type="project" value="UniProtKB-KW"/>
</dbReference>
<dbReference type="GO" id="GO:0008380">
    <property type="term" value="P:RNA splicing"/>
    <property type="evidence" value="ECO:0007669"/>
    <property type="project" value="UniProtKB-UniRule"/>
</dbReference>
<dbReference type="GO" id="GO:0008033">
    <property type="term" value="P:tRNA processing"/>
    <property type="evidence" value="ECO:0007669"/>
    <property type="project" value="UniProtKB-KW"/>
</dbReference>
<dbReference type="HAMAP" id="MF_01390">
    <property type="entry name" value="MatK"/>
    <property type="match status" value="1"/>
</dbReference>
<dbReference type="InterPro" id="IPR024937">
    <property type="entry name" value="Domain_X"/>
</dbReference>
<dbReference type="InterPro" id="IPR002866">
    <property type="entry name" value="Maturase_MatK"/>
</dbReference>
<dbReference type="InterPro" id="IPR024942">
    <property type="entry name" value="Maturase_MatK_N"/>
</dbReference>
<dbReference type="PANTHER" id="PTHR34811">
    <property type="entry name" value="MATURASE K"/>
    <property type="match status" value="1"/>
</dbReference>
<dbReference type="PANTHER" id="PTHR34811:SF1">
    <property type="entry name" value="MATURASE K"/>
    <property type="match status" value="1"/>
</dbReference>
<dbReference type="Pfam" id="PF01348">
    <property type="entry name" value="Intron_maturas2"/>
    <property type="match status" value="1"/>
</dbReference>
<dbReference type="Pfam" id="PF01824">
    <property type="entry name" value="MatK_N"/>
    <property type="match status" value="1"/>
</dbReference>
<feature type="chain" id="PRO_0000143264" description="Maturase K">
    <location>
        <begin position="1"/>
        <end position="513"/>
    </location>
</feature>
<accession>Q9TIA9</accession>
<gene>
    <name evidence="1" type="primary">matK</name>
</gene>
<reference key="1">
    <citation type="submission" date="1999-04" db="EMBL/GenBank/DDBJ databases">
        <title>Phylogenetic relationships in subfamily Chloridoideae (Poaceae) based on matK sequences: a preliminary assessment.</title>
        <authorList>
            <person name="Hilu K.W."/>
            <person name="Alice L.A."/>
        </authorList>
    </citation>
    <scope>NUCLEOTIDE SEQUENCE [GENOMIC DNA]</scope>
</reference>
<evidence type="ECO:0000255" key="1">
    <source>
        <dbReference type="HAMAP-Rule" id="MF_01390"/>
    </source>
</evidence>
<name>MATK_ASTLA</name>
<sequence length="513" mass="61515">MAKFEGYSEKQKSRQQYFVYPLLFQEYIYAFAHDYVLNGSEPVEIFGCNNKKFSSLLVKRLIIRMYQQNFWINSVNHPNQDRLLDHSNHFYSEFYSQILSEGFAIVVEIPFSLGQLSCPEEKEIPKFQNLRSIHSIFPFLEDKFLHLHYLSHIEIPYPIHFEILVQLLEYRIKDVPSLHLLRFFLNYYSNWNSLITSMKSIFLFSKENKRLSRFLYNSYVSEYEFFLLFLRKQSSCLRLTSSGTFLERIHFSRKMEHFGVMYPGFFRKTIWFFMDPLMHYVRYQRKVILASKGTLLFQKKWKSYLVNFSQYFFSFWTQPQRIRLNQLTNSCFDFLGYRSSVPINTFLVRNQMLENFFLIDTRMKKFDTTAPATPLIGSLSKAQFCTGSGHPISKPIWTDLSDWDILDRFGRICRNLFHYHSGSSKKRTLYRLKYILRLSCARTLARKHKSTVRTFMQRLGSVFLEEFFTEEEQVFSLMFAKTTHFSFHGSHSERIWYLDIIRIDDLVNPLTLN</sequence>
<proteinExistence type="inferred from homology"/>
<keyword id="KW-0150">Chloroplast</keyword>
<keyword id="KW-0507">mRNA processing</keyword>
<keyword id="KW-0934">Plastid</keyword>
<keyword id="KW-0694">RNA-binding</keyword>
<keyword id="KW-0819">tRNA processing</keyword>
<geneLocation type="chloroplast"/>
<comment type="function">
    <text evidence="1">Usually encoded in the trnK tRNA gene intron. Probably assists in splicing its own and other chloroplast group II introns.</text>
</comment>
<comment type="subcellular location">
    <subcellularLocation>
        <location>Plastid</location>
        <location>Chloroplast</location>
    </subcellularLocation>
</comment>
<comment type="similarity">
    <text evidence="1">Belongs to the intron maturase 2 family. MatK subfamily.</text>
</comment>
<protein>
    <recommendedName>
        <fullName evidence="1">Maturase K</fullName>
    </recommendedName>
    <alternativeName>
        <fullName evidence="1">Intron maturase</fullName>
    </alternativeName>
</protein>